<protein>
    <recommendedName>
        <fullName evidence="1">Protoheme IX farnesyltransferase</fullName>
        <ecNumber evidence="1">2.5.1.141</ecNumber>
    </recommendedName>
    <alternativeName>
        <fullName evidence="1">Heme B farnesyltransferase</fullName>
    </alternativeName>
    <alternativeName>
        <fullName evidence="1">Heme O synthase</fullName>
    </alternativeName>
</protein>
<accession>Q73I75</accession>
<comment type="function">
    <text evidence="1">Converts heme B (protoheme IX) to heme O by substitution of the vinyl group on carbon 2 of heme B porphyrin ring with a hydroxyethyl farnesyl side group.</text>
</comment>
<comment type="catalytic activity">
    <reaction evidence="1">
        <text>heme b + (2E,6E)-farnesyl diphosphate + H2O = Fe(II)-heme o + diphosphate</text>
        <dbReference type="Rhea" id="RHEA:28070"/>
        <dbReference type="ChEBI" id="CHEBI:15377"/>
        <dbReference type="ChEBI" id="CHEBI:33019"/>
        <dbReference type="ChEBI" id="CHEBI:60344"/>
        <dbReference type="ChEBI" id="CHEBI:60530"/>
        <dbReference type="ChEBI" id="CHEBI:175763"/>
        <dbReference type="EC" id="2.5.1.141"/>
    </reaction>
</comment>
<comment type="pathway">
    <text evidence="1">Porphyrin-containing compound metabolism; heme O biosynthesis; heme O from protoheme: step 1/1.</text>
</comment>
<comment type="subcellular location">
    <subcellularLocation>
        <location evidence="1">Cell membrane</location>
        <topology evidence="1">Multi-pass membrane protein</topology>
    </subcellularLocation>
</comment>
<comment type="miscellaneous">
    <text evidence="1">Carbon 2 of the heme B porphyrin ring is defined according to the Fischer nomenclature.</text>
</comment>
<comment type="similarity">
    <text evidence="1">Belongs to the UbiA prenyltransferase family. Protoheme IX farnesyltransferase subfamily.</text>
</comment>
<proteinExistence type="inferred from homology"/>
<reference key="1">
    <citation type="journal article" date="2004" name="PLoS Biol.">
        <title>Phylogenomics of the reproductive parasite Wolbachia pipientis wMel: a streamlined genome overrun by mobile genetic elements.</title>
        <authorList>
            <person name="Wu M."/>
            <person name="Sun L.V."/>
            <person name="Vamathevan J.J."/>
            <person name="Riegler M."/>
            <person name="DeBoy R.T."/>
            <person name="Brownlie J.C."/>
            <person name="McGraw E.A."/>
            <person name="Martin W."/>
            <person name="Esser C."/>
            <person name="Ahmadinejad N."/>
            <person name="Wiegand C."/>
            <person name="Madupu R."/>
            <person name="Beanan M.J."/>
            <person name="Brinkac L.M."/>
            <person name="Daugherty S.C."/>
            <person name="Durkin A.S."/>
            <person name="Kolonay J.F."/>
            <person name="Nelson W.C."/>
            <person name="Mohamoud Y."/>
            <person name="Lee P."/>
            <person name="Berry K.J."/>
            <person name="Young M.B."/>
            <person name="Utterback T.R."/>
            <person name="Weidman J.F."/>
            <person name="Nierman W.C."/>
            <person name="Paulsen I.T."/>
            <person name="Nelson K.E."/>
            <person name="Tettelin H."/>
            <person name="O'Neill S.L."/>
            <person name="Eisen J.A."/>
        </authorList>
    </citation>
    <scope>NUCLEOTIDE SEQUENCE [LARGE SCALE GENOMIC DNA]</scope>
</reference>
<gene>
    <name evidence="1" type="primary">ctaB</name>
    <name type="ordered locus">WD_0302</name>
</gene>
<organism>
    <name type="scientific">Wolbachia pipientis wMel</name>
    <dbReference type="NCBI Taxonomy" id="163164"/>
    <lineage>
        <taxon>Bacteria</taxon>
        <taxon>Pseudomonadati</taxon>
        <taxon>Pseudomonadota</taxon>
        <taxon>Alphaproteobacteria</taxon>
        <taxon>Rickettsiales</taxon>
        <taxon>Anaplasmataceae</taxon>
        <taxon>Wolbachieae</taxon>
        <taxon>Wolbachia</taxon>
    </lineage>
</organism>
<name>COXX_WOLPM</name>
<evidence type="ECO:0000255" key="1">
    <source>
        <dbReference type="HAMAP-Rule" id="MF_00154"/>
    </source>
</evidence>
<sequence length="295" mass="33031">MYTSVLLNVESTILDFWRLLKPRIMYLVVFTAVAGMVTAPGSMHPFLALISLICVALGSGSAGAINMWYDRDIDLLMERTKNRPIPSGRVSAESALEFGITLGILSVFIMAIAVNYISAALLAVSILFYVFIYTIWLKRRTPQNIVIGGAAGAFPPMIGWAAVTNSVSWESFILFLVIFMWTPPHFWALSLNKSEDYAKASIPMSNIVYGPEKTRKYILIYSVLLVLTSLLPALFLKKALLYLSMATFEGCVFIWYAVSVMKFKNHSSQKKMFSYSISYLFSLFASIIFCSIDLF</sequence>
<keyword id="KW-1003">Cell membrane</keyword>
<keyword id="KW-0350">Heme biosynthesis</keyword>
<keyword id="KW-0472">Membrane</keyword>
<keyword id="KW-0808">Transferase</keyword>
<keyword id="KW-0812">Transmembrane</keyword>
<keyword id="KW-1133">Transmembrane helix</keyword>
<dbReference type="EC" id="2.5.1.141" evidence="1"/>
<dbReference type="EMBL" id="AE017196">
    <property type="protein sequence ID" value="AAS14037.1"/>
    <property type="molecule type" value="Genomic_DNA"/>
</dbReference>
<dbReference type="RefSeq" id="WP_010962500.1">
    <property type="nucleotide sequence ID" value="NZ_OX384529.1"/>
</dbReference>
<dbReference type="SMR" id="Q73I75"/>
<dbReference type="EnsemblBacteria" id="AAS14037">
    <property type="protein sequence ID" value="AAS14037"/>
    <property type="gene ID" value="WD_0302"/>
</dbReference>
<dbReference type="KEGG" id="wol:WD_0302"/>
<dbReference type="eggNOG" id="COG0109">
    <property type="taxonomic scope" value="Bacteria"/>
</dbReference>
<dbReference type="UniPathway" id="UPA00834">
    <property type="reaction ID" value="UER00712"/>
</dbReference>
<dbReference type="Proteomes" id="UP000008215">
    <property type="component" value="Chromosome"/>
</dbReference>
<dbReference type="GO" id="GO:0005886">
    <property type="term" value="C:plasma membrane"/>
    <property type="evidence" value="ECO:0007669"/>
    <property type="project" value="UniProtKB-SubCell"/>
</dbReference>
<dbReference type="GO" id="GO:0008495">
    <property type="term" value="F:protoheme IX farnesyltransferase activity"/>
    <property type="evidence" value="ECO:0007669"/>
    <property type="project" value="UniProtKB-UniRule"/>
</dbReference>
<dbReference type="GO" id="GO:0048034">
    <property type="term" value="P:heme O biosynthetic process"/>
    <property type="evidence" value="ECO:0007669"/>
    <property type="project" value="UniProtKB-UniRule"/>
</dbReference>
<dbReference type="CDD" id="cd13957">
    <property type="entry name" value="PT_UbiA_Cox10"/>
    <property type="match status" value="1"/>
</dbReference>
<dbReference type="FunFam" id="1.10.357.140:FF:000001">
    <property type="entry name" value="Protoheme IX farnesyltransferase"/>
    <property type="match status" value="1"/>
</dbReference>
<dbReference type="Gene3D" id="1.10.357.140">
    <property type="entry name" value="UbiA prenyltransferase"/>
    <property type="match status" value="1"/>
</dbReference>
<dbReference type="HAMAP" id="MF_00154">
    <property type="entry name" value="CyoE_CtaB"/>
    <property type="match status" value="1"/>
</dbReference>
<dbReference type="InterPro" id="IPR006369">
    <property type="entry name" value="Protohaem_IX_farnesylTrfase"/>
</dbReference>
<dbReference type="InterPro" id="IPR000537">
    <property type="entry name" value="UbiA_prenyltransferase"/>
</dbReference>
<dbReference type="InterPro" id="IPR030470">
    <property type="entry name" value="UbiA_prenylTrfase_CS"/>
</dbReference>
<dbReference type="InterPro" id="IPR044878">
    <property type="entry name" value="UbiA_sf"/>
</dbReference>
<dbReference type="NCBIfam" id="TIGR01473">
    <property type="entry name" value="cyoE_ctaB"/>
    <property type="match status" value="1"/>
</dbReference>
<dbReference type="NCBIfam" id="NF003349">
    <property type="entry name" value="PRK04375.1-2"/>
    <property type="match status" value="1"/>
</dbReference>
<dbReference type="PANTHER" id="PTHR43448:SF7">
    <property type="entry name" value="4-HYDROXYBENZOATE SOLANESYLTRANSFERASE"/>
    <property type="match status" value="1"/>
</dbReference>
<dbReference type="PANTHER" id="PTHR43448">
    <property type="entry name" value="PROTOHEME IX FARNESYLTRANSFERASE, MITOCHONDRIAL"/>
    <property type="match status" value="1"/>
</dbReference>
<dbReference type="Pfam" id="PF01040">
    <property type="entry name" value="UbiA"/>
    <property type="match status" value="1"/>
</dbReference>
<dbReference type="PROSITE" id="PS00943">
    <property type="entry name" value="UBIA"/>
    <property type="match status" value="1"/>
</dbReference>
<feature type="chain" id="PRO_0000327189" description="Protoheme IX farnesyltransferase">
    <location>
        <begin position="1"/>
        <end position="295"/>
    </location>
</feature>
<feature type="transmembrane region" description="Helical" evidence="1">
    <location>
        <begin position="24"/>
        <end position="44"/>
    </location>
</feature>
<feature type="transmembrane region" description="Helical" evidence="1">
    <location>
        <begin position="45"/>
        <end position="65"/>
    </location>
</feature>
<feature type="transmembrane region" description="Helical" evidence="1">
    <location>
        <begin position="94"/>
        <end position="114"/>
    </location>
</feature>
<feature type="transmembrane region" description="Helical" evidence="1">
    <location>
        <begin position="117"/>
        <end position="137"/>
    </location>
</feature>
<feature type="transmembrane region" description="Helical" evidence="1">
    <location>
        <begin position="144"/>
        <end position="164"/>
    </location>
</feature>
<feature type="transmembrane region" description="Helical" evidence="1">
    <location>
        <begin position="171"/>
        <end position="191"/>
    </location>
</feature>
<feature type="transmembrane region" description="Helical" evidence="1">
    <location>
        <begin position="216"/>
        <end position="236"/>
    </location>
</feature>
<feature type="transmembrane region" description="Helical" evidence="1">
    <location>
        <begin position="240"/>
        <end position="260"/>
    </location>
</feature>
<feature type="transmembrane region" description="Helical" evidence="1">
    <location>
        <begin position="272"/>
        <end position="292"/>
    </location>
</feature>